<gene>
    <name evidence="1" type="primary">acpP</name>
    <name type="ordered locus">BcerKBAB4_3673</name>
</gene>
<accession>A9VT88</accession>
<feature type="chain" id="PRO_1000139002" description="Acyl carrier protein">
    <location>
        <begin position="1"/>
        <end position="77"/>
    </location>
</feature>
<feature type="domain" description="Carrier" evidence="2">
    <location>
        <begin position="2"/>
        <end position="77"/>
    </location>
</feature>
<feature type="modified residue" description="O-(pantetheine 4'-phosphoryl)serine" evidence="2">
    <location>
        <position position="37"/>
    </location>
</feature>
<protein>
    <recommendedName>
        <fullName evidence="1">Acyl carrier protein</fullName>
        <shortName evidence="1">ACP</shortName>
    </recommendedName>
</protein>
<reference key="1">
    <citation type="journal article" date="2008" name="Chem. Biol. Interact.">
        <title>Extending the Bacillus cereus group genomics to putative food-borne pathogens of different toxicity.</title>
        <authorList>
            <person name="Lapidus A."/>
            <person name="Goltsman E."/>
            <person name="Auger S."/>
            <person name="Galleron N."/>
            <person name="Segurens B."/>
            <person name="Dossat C."/>
            <person name="Land M.L."/>
            <person name="Broussolle V."/>
            <person name="Brillard J."/>
            <person name="Guinebretiere M.-H."/>
            <person name="Sanchis V."/>
            <person name="Nguen-the C."/>
            <person name="Lereclus D."/>
            <person name="Richardson P."/>
            <person name="Wincker P."/>
            <person name="Weissenbach J."/>
            <person name="Ehrlich S.D."/>
            <person name="Sorokin A."/>
        </authorList>
    </citation>
    <scope>NUCLEOTIDE SEQUENCE [LARGE SCALE GENOMIC DNA]</scope>
    <source>
        <strain>KBAB4</strain>
    </source>
</reference>
<organism>
    <name type="scientific">Bacillus mycoides (strain KBAB4)</name>
    <name type="common">Bacillus weihenstephanensis</name>
    <dbReference type="NCBI Taxonomy" id="315730"/>
    <lineage>
        <taxon>Bacteria</taxon>
        <taxon>Bacillati</taxon>
        <taxon>Bacillota</taxon>
        <taxon>Bacilli</taxon>
        <taxon>Bacillales</taxon>
        <taxon>Bacillaceae</taxon>
        <taxon>Bacillus</taxon>
        <taxon>Bacillus cereus group</taxon>
    </lineage>
</organism>
<sequence length="77" mass="8498">MADVLERVTKIVVDRLGVEETEVVPAASFKEDLGADSLDVVELVMQLEDEFEMEISDEDAEKIATVGDAVTYIESHL</sequence>
<dbReference type="EMBL" id="CP000903">
    <property type="protein sequence ID" value="ABY44844.1"/>
    <property type="molecule type" value="Genomic_DNA"/>
</dbReference>
<dbReference type="RefSeq" id="WP_002014515.1">
    <property type="nucleotide sequence ID" value="NZ_CAKMRX030000111.1"/>
</dbReference>
<dbReference type="SMR" id="A9VT88"/>
<dbReference type="GeneID" id="66266586"/>
<dbReference type="KEGG" id="bwe:BcerKBAB4_3673"/>
<dbReference type="eggNOG" id="COG0236">
    <property type="taxonomic scope" value="Bacteria"/>
</dbReference>
<dbReference type="HOGENOM" id="CLU_108696_5_3_9"/>
<dbReference type="UniPathway" id="UPA00094"/>
<dbReference type="Proteomes" id="UP000002154">
    <property type="component" value="Chromosome"/>
</dbReference>
<dbReference type="GO" id="GO:0005829">
    <property type="term" value="C:cytosol"/>
    <property type="evidence" value="ECO:0007669"/>
    <property type="project" value="TreeGrafter"/>
</dbReference>
<dbReference type="GO" id="GO:0016020">
    <property type="term" value="C:membrane"/>
    <property type="evidence" value="ECO:0007669"/>
    <property type="project" value="GOC"/>
</dbReference>
<dbReference type="GO" id="GO:0000035">
    <property type="term" value="F:acyl binding"/>
    <property type="evidence" value="ECO:0007669"/>
    <property type="project" value="TreeGrafter"/>
</dbReference>
<dbReference type="GO" id="GO:0000036">
    <property type="term" value="F:acyl carrier activity"/>
    <property type="evidence" value="ECO:0007669"/>
    <property type="project" value="UniProtKB-UniRule"/>
</dbReference>
<dbReference type="GO" id="GO:0009245">
    <property type="term" value="P:lipid A biosynthetic process"/>
    <property type="evidence" value="ECO:0007669"/>
    <property type="project" value="TreeGrafter"/>
</dbReference>
<dbReference type="FunFam" id="1.10.1200.10:FF:000001">
    <property type="entry name" value="Acyl carrier protein"/>
    <property type="match status" value="1"/>
</dbReference>
<dbReference type="Gene3D" id="1.10.1200.10">
    <property type="entry name" value="ACP-like"/>
    <property type="match status" value="1"/>
</dbReference>
<dbReference type="HAMAP" id="MF_01217">
    <property type="entry name" value="Acyl_carrier"/>
    <property type="match status" value="1"/>
</dbReference>
<dbReference type="InterPro" id="IPR003231">
    <property type="entry name" value="ACP"/>
</dbReference>
<dbReference type="InterPro" id="IPR036736">
    <property type="entry name" value="ACP-like_sf"/>
</dbReference>
<dbReference type="InterPro" id="IPR009081">
    <property type="entry name" value="PP-bd_ACP"/>
</dbReference>
<dbReference type="InterPro" id="IPR006162">
    <property type="entry name" value="Ppantetheine_attach_site"/>
</dbReference>
<dbReference type="NCBIfam" id="TIGR00517">
    <property type="entry name" value="acyl_carrier"/>
    <property type="match status" value="1"/>
</dbReference>
<dbReference type="NCBIfam" id="NF002148">
    <property type="entry name" value="PRK00982.1-2"/>
    <property type="match status" value="1"/>
</dbReference>
<dbReference type="NCBIfam" id="NF002149">
    <property type="entry name" value="PRK00982.1-3"/>
    <property type="match status" value="1"/>
</dbReference>
<dbReference type="NCBIfam" id="NF002150">
    <property type="entry name" value="PRK00982.1-4"/>
    <property type="match status" value="1"/>
</dbReference>
<dbReference type="NCBIfam" id="NF002151">
    <property type="entry name" value="PRK00982.1-5"/>
    <property type="match status" value="1"/>
</dbReference>
<dbReference type="PANTHER" id="PTHR20863">
    <property type="entry name" value="ACYL CARRIER PROTEIN"/>
    <property type="match status" value="1"/>
</dbReference>
<dbReference type="PANTHER" id="PTHR20863:SF76">
    <property type="entry name" value="CARRIER DOMAIN-CONTAINING PROTEIN"/>
    <property type="match status" value="1"/>
</dbReference>
<dbReference type="Pfam" id="PF00550">
    <property type="entry name" value="PP-binding"/>
    <property type="match status" value="1"/>
</dbReference>
<dbReference type="SUPFAM" id="SSF47336">
    <property type="entry name" value="ACP-like"/>
    <property type="match status" value="1"/>
</dbReference>
<dbReference type="PROSITE" id="PS50075">
    <property type="entry name" value="CARRIER"/>
    <property type="match status" value="1"/>
</dbReference>
<dbReference type="PROSITE" id="PS00012">
    <property type="entry name" value="PHOSPHOPANTETHEINE"/>
    <property type="match status" value="1"/>
</dbReference>
<proteinExistence type="inferred from homology"/>
<name>ACP_BACMK</name>
<comment type="function">
    <text evidence="1">Carrier of the growing fatty acid chain in fatty acid biosynthesis.</text>
</comment>
<comment type="pathway">
    <text evidence="1">Lipid metabolism; fatty acid biosynthesis.</text>
</comment>
<comment type="subcellular location">
    <subcellularLocation>
        <location evidence="1">Cytoplasm</location>
    </subcellularLocation>
</comment>
<comment type="PTM">
    <text evidence="1">4'-phosphopantetheine is transferred from CoA to a specific serine of apo-ACP by AcpS. This modification is essential for activity because fatty acids are bound in thioester linkage to the sulfhydryl of the prosthetic group.</text>
</comment>
<comment type="similarity">
    <text evidence="1">Belongs to the acyl carrier protein (ACP) family.</text>
</comment>
<evidence type="ECO:0000255" key="1">
    <source>
        <dbReference type="HAMAP-Rule" id="MF_01217"/>
    </source>
</evidence>
<evidence type="ECO:0000255" key="2">
    <source>
        <dbReference type="PROSITE-ProRule" id="PRU00258"/>
    </source>
</evidence>
<keyword id="KW-0963">Cytoplasm</keyword>
<keyword id="KW-0275">Fatty acid biosynthesis</keyword>
<keyword id="KW-0276">Fatty acid metabolism</keyword>
<keyword id="KW-0444">Lipid biosynthesis</keyword>
<keyword id="KW-0443">Lipid metabolism</keyword>
<keyword id="KW-0596">Phosphopantetheine</keyword>
<keyword id="KW-0597">Phosphoprotein</keyword>